<keyword id="KW-0456">Lyase</keyword>
<keyword id="KW-0501">Molybdenum cofactor biosynthesis</keyword>
<comment type="function">
    <text evidence="1">Catalyzes the conversion of (8S)-3',8-cyclo-7,8-dihydroguanosine 5'-triphosphate to cyclic pyranopterin monophosphate (cPMP).</text>
</comment>
<comment type="catalytic activity">
    <reaction evidence="1">
        <text>(8S)-3',8-cyclo-7,8-dihydroguanosine 5'-triphosphate = cyclic pyranopterin phosphate + diphosphate</text>
        <dbReference type="Rhea" id="RHEA:49580"/>
        <dbReference type="ChEBI" id="CHEBI:33019"/>
        <dbReference type="ChEBI" id="CHEBI:59648"/>
        <dbReference type="ChEBI" id="CHEBI:131766"/>
        <dbReference type="EC" id="4.6.1.17"/>
    </reaction>
</comment>
<comment type="pathway">
    <text evidence="1">Cofactor biosynthesis; molybdopterin biosynthesis.</text>
</comment>
<comment type="subunit">
    <text evidence="1">Homohexamer; trimer of dimers.</text>
</comment>
<comment type="similarity">
    <text evidence="1">Belongs to the MoaC family.</text>
</comment>
<reference key="1">
    <citation type="journal article" date="2002" name="Proc. Natl. Acad. Sci. U.S.A.">
        <title>The genome sequence of the facultative intracellular pathogen Brucella melitensis.</title>
        <authorList>
            <person name="DelVecchio V.G."/>
            <person name="Kapatral V."/>
            <person name="Redkar R.J."/>
            <person name="Patra G."/>
            <person name="Mujer C."/>
            <person name="Los T."/>
            <person name="Ivanova N."/>
            <person name="Anderson I."/>
            <person name="Bhattacharyya A."/>
            <person name="Lykidis A."/>
            <person name="Reznik G."/>
            <person name="Jablonski L."/>
            <person name="Larsen N."/>
            <person name="D'Souza M."/>
            <person name="Bernal A."/>
            <person name="Mazur M."/>
            <person name="Goltsman E."/>
            <person name="Selkov E."/>
            <person name="Elzer P.H."/>
            <person name="Hagius S."/>
            <person name="O'Callaghan D."/>
            <person name="Letesson J.-J."/>
            <person name="Haselkorn R."/>
            <person name="Kyrpides N.C."/>
            <person name="Overbeek R."/>
        </authorList>
    </citation>
    <scope>NUCLEOTIDE SEQUENCE [LARGE SCALE GENOMIC DNA]</scope>
    <source>
        <strain>ATCC 23456 / CCUG 17765 / NCTC 10094 / 16M</strain>
    </source>
</reference>
<protein>
    <recommendedName>
        <fullName evidence="1">Cyclic pyranopterin monophosphate synthase</fullName>
        <ecNumber evidence="1">4.6.1.17</ecNumber>
    </recommendedName>
    <alternativeName>
        <fullName evidence="1">Molybdenum cofactor biosynthesis protein C</fullName>
    </alternativeName>
</protein>
<organism>
    <name type="scientific">Brucella melitensis biotype 1 (strain ATCC 23456 / CCUG 17765 / NCTC 10094 / 16M)</name>
    <dbReference type="NCBI Taxonomy" id="224914"/>
    <lineage>
        <taxon>Bacteria</taxon>
        <taxon>Pseudomonadati</taxon>
        <taxon>Pseudomonadota</taxon>
        <taxon>Alphaproteobacteria</taxon>
        <taxon>Hyphomicrobiales</taxon>
        <taxon>Brucellaceae</taxon>
        <taxon>Brucella/Ochrobactrum group</taxon>
        <taxon>Brucella</taxon>
    </lineage>
</organism>
<sequence>MSGKLTHIDQTGAANMVDVGSKDETERQAVAEGAVRMKPETLALILEGNAAKGDVIGTARLAGIMAAKRTSDLIPLCHPLMLTKVAVEIEPDENLPGLRVRALARLKGRTGVEMEALTAASVTCLTIYDMAKAVDRHMEIGSIRVIEKSGGKSGDWAVSDPASMR</sequence>
<accession>Q8YHF9</accession>
<name>MOAC_BRUME</name>
<proteinExistence type="inferred from homology"/>
<gene>
    <name evidence="1" type="primary">moaC</name>
    <name type="ordered locus">BMEI0842</name>
</gene>
<evidence type="ECO:0000255" key="1">
    <source>
        <dbReference type="HAMAP-Rule" id="MF_01224"/>
    </source>
</evidence>
<feature type="chain" id="PRO_0000097789" description="Cyclic pyranopterin monophosphate synthase">
    <location>
        <begin position="1"/>
        <end position="165"/>
    </location>
</feature>
<feature type="active site" evidence="1">
    <location>
        <position position="129"/>
    </location>
</feature>
<feature type="binding site" evidence="1">
    <location>
        <begin position="76"/>
        <end position="78"/>
    </location>
    <ligand>
        <name>substrate</name>
    </ligand>
</feature>
<feature type="binding site" evidence="1">
    <location>
        <begin position="114"/>
        <end position="115"/>
    </location>
    <ligand>
        <name>substrate</name>
    </ligand>
</feature>
<dbReference type="EC" id="4.6.1.17" evidence="1"/>
<dbReference type="EMBL" id="AE008917">
    <property type="protein sequence ID" value="AAL52023.1"/>
    <property type="molecule type" value="Genomic_DNA"/>
</dbReference>
<dbReference type="PIR" id="AD3357">
    <property type="entry name" value="AD3357"/>
</dbReference>
<dbReference type="RefSeq" id="WP_004683848.1">
    <property type="nucleotide sequence ID" value="NZ_GG703786.1"/>
</dbReference>
<dbReference type="SMR" id="Q8YHF9"/>
<dbReference type="GeneID" id="97533606"/>
<dbReference type="KEGG" id="bme:BMEI0842"/>
<dbReference type="KEGG" id="bmel:DK63_578"/>
<dbReference type="PATRIC" id="fig|224914.52.peg.602"/>
<dbReference type="eggNOG" id="COG0315">
    <property type="taxonomic scope" value="Bacteria"/>
</dbReference>
<dbReference type="PhylomeDB" id="Q8YHF9"/>
<dbReference type="UniPathway" id="UPA00344"/>
<dbReference type="Proteomes" id="UP000000419">
    <property type="component" value="Chromosome I"/>
</dbReference>
<dbReference type="GO" id="GO:0061799">
    <property type="term" value="F:cyclic pyranopterin monophosphate synthase activity"/>
    <property type="evidence" value="ECO:0007669"/>
    <property type="project" value="UniProtKB-UniRule"/>
</dbReference>
<dbReference type="GO" id="GO:0006777">
    <property type="term" value="P:Mo-molybdopterin cofactor biosynthetic process"/>
    <property type="evidence" value="ECO:0007669"/>
    <property type="project" value="UniProtKB-UniRule"/>
</dbReference>
<dbReference type="CDD" id="cd01420">
    <property type="entry name" value="MoaC_PE"/>
    <property type="match status" value="1"/>
</dbReference>
<dbReference type="Gene3D" id="3.30.70.640">
    <property type="entry name" value="Molybdopterin cofactor biosynthesis C (MoaC) domain"/>
    <property type="match status" value="1"/>
</dbReference>
<dbReference type="HAMAP" id="MF_01224_B">
    <property type="entry name" value="MoaC_B"/>
    <property type="match status" value="1"/>
</dbReference>
<dbReference type="InterPro" id="IPR023045">
    <property type="entry name" value="MoaC"/>
</dbReference>
<dbReference type="InterPro" id="IPR047594">
    <property type="entry name" value="MoaC_bact/euk"/>
</dbReference>
<dbReference type="InterPro" id="IPR036522">
    <property type="entry name" value="MoaC_sf"/>
</dbReference>
<dbReference type="InterPro" id="IPR050105">
    <property type="entry name" value="MoCo_biosynth_MoaA/MoaC"/>
</dbReference>
<dbReference type="InterPro" id="IPR002820">
    <property type="entry name" value="Mopterin_CF_biosynth-C_dom"/>
</dbReference>
<dbReference type="NCBIfam" id="TIGR00581">
    <property type="entry name" value="moaC"/>
    <property type="match status" value="1"/>
</dbReference>
<dbReference type="NCBIfam" id="NF006870">
    <property type="entry name" value="PRK09364.1"/>
    <property type="match status" value="1"/>
</dbReference>
<dbReference type="PANTHER" id="PTHR22960">
    <property type="entry name" value="MOLYBDOPTERIN COFACTOR SYNTHESIS PROTEIN A"/>
    <property type="match status" value="1"/>
</dbReference>
<dbReference type="Pfam" id="PF01967">
    <property type="entry name" value="MoaC"/>
    <property type="match status" value="1"/>
</dbReference>
<dbReference type="SUPFAM" id="SSF55040">
    <property type="entry name" value="Molybdenum cofactor biosynthesis protein C, MoaC"/>
    <property type="match status" value="1"/>
</dbReference>